<comment type="function">
    <text evidence="1">This protein specifically catalyzes the removal of signal peptides from prolipoproteins.</text>
</comment>
<comment type="catalytic activity">
    <reaction evidence="1">
        <text>Release of signal peptides from bacterial membrane prolipoproteins. Hydrolyzes -Xaa-Yaa-Zaa-|-(S,diacylglyceryl)Cys-, in which Xaa is hydrophobic (preferably Leu), and Yaa (Ala or Ser) and Zaa (Gly or Ala) have small, neutral side chains.</text>
        <dbReference type="EC" id="3.4.23.36"/>
    </reaction>
</comment>
<comment type="pathway">
    <text evidence="1">Protein modification; lipoprotein biosynthesis (signal peptide cleavage).</text>
</comment>
<comment type="subcellular location">
    <subcellularLocation>
        <location evidence="1">Cell inner membrane</location>
        <topology evidence="1">Multi-pass membrane protein</topology>
    </subcellularLocation>
</comment>
<comment type="similarity">
    <text evidence="1">Belongs to the peptidase A8 family.</text>
</comment>
<gene>
    <name evidence="1" type="primary">lspA</name>
    <name type="ordered locus">CT1810</name>
</gene>
<proteinExistence type="inferred from homology"/>
<reference key="1">
    <citation type="journal article" date="2002" name="Proc. Natl. Acad. Sci. U.S.A.">
        <title>The complete genome sequence of Chlorobium tepidum TLS, a photosynthetic, anaerobic, green-sulfur bacterium.</title>
        <authorList>
            <person name="Eisen J.A."/>
            <person name="Nelson K.E."/>
            <person name="Paulsen I.T."/>
            <person name="Heidelberg J.F."/>
            <person name="Wu M."/>
            <person name="Dodson R.J."/>
            <person name="DeBoy R.T."/>
            <person name="Gwinn M.L."/>
            <person name="Nelson W.C."/>
            <person name="Haft D.H."/>
            <person name="Hickey E.K."/>
            <person name="Peterson J.D."/>
            <person name="Durkin A.S."/>
            <person name="Kolonay J.F."/>
            <person name="Yang F."/>
            <person name="Holt I.E."/>
            <person name="Umayam L.A."/>
            <person name="Mason T.M."/>
            <person name="Brenner M."/>
            <person name="Shea T.P."/>
            <person name="Parksey D.S."/>
            <person name="Nierman W.C."/>
            <person name="Feldblyum T.V."/>
            <person name="Hansen C.L."/>
            <person name="Craven M.B."/>
            <person name="Radune D."/>
            <person name="Vamathevan J.J."/>
            <person name="Khouri H.M."/>
            <person name="White O."/>
            <person name="Gruber T.M."/>
            <person name="Ketchum K.A."/>
            <person name="Venter J.C."/>
            <person name="Tettelin H."/>
            <person name="Bryant D.A."/>
            <person name="Fraser C.M."/>
        </authorList>
    </citation>
    <scope>NUCLEOTIDE SEQUENCE [LARGE SCALE GENOMIC DNA]</scope>
    <source>
        <strain>ATCC 49652 / DSM 12025 / NBRC 103806 / TLS</strain>
    </source>
</reference>
<organism>
    <name type="scientific">Chlorobaculum tepidum (strain ATCC 49652 / DSM 12025 / NBRC 103806 / TLS)</name>
    <name type="common">Chlorobium tepidum</name>
    <dbReference type="NCBI Taxonomy" id="194439"/>
    <lineage>
        <taxon>Bacteria</taxon>
        <taxon>Pseudomonadati</taxon>
        <taxon>Chlorobiota</taxon>
        <taxon>Chlorobiia</taxon>
        <taxon>Chlorobiales</taxon>
        <taxon>Chlorobiaceae</taxon>
        <taxon>Chlorobaculum</taxon>
    </lineage>
</organism>
<keyword id="KW-0064">Aspartyl protease</keyword>
<keyword id="KW-0997">Cell inner membrane</keyword>
<keyword id="KW-1003">Cell membrane</keyword>
<keyword id="KW-0378">Hydrolase</keyword>
<keyword id="KW-0472">Membrane</keyword>
<keyword id="KW-0645">Protease</keyword>
<keyword id="KW-1185">Reference proteome</keyword>
<keyword id="KW-0812">Transmembrane</keyword>
<keyword id="KW-1133">Transmembrane helix</keyword>
<sequence length="162" mass="17961">MALFYLLAIAAALLDRVTKLLAIHYLRDGAQSIVIIPDWLKLTYAENLGIAFSVRFLPPTGLLFLTLAISAGVVWYVHKSNNRSPLFLTAFGLILGGGIGNLIDRVMLGHVVDFIYFDLYHGALFGIPLDLWPIFNVADSCITIGACMIVLFHEKIFTRKHA</sequence>
<name>LSPA_CHLTE</name>
<evidence type="ECO:0000255" key="1">
    <source>
        <dbReference type="HAMAP-Rule" id="MF_00161"/>
    </source>
</evidence>
<accession>Q8KBH7</accession>
<feature type="chain" id="PRO_0000289365" description="Lipoprotein signal peptidase">
    <location>
        <begin position="1"/>
        <end position="162"/>
    </location>
</feature>
<feature type="transmembrane region" description="Helical" evidence="1">
    <location>
        <begin position="56"/>
        <end position="76"/>
    </location>
</feature>
<feature type="transmembrane region" description="Helical" evidence="1">
    <location>
        <begin position="84"/>
        <end position="104"/>
    </location>
</feature>
<feature type="transmembrane region" description="Helical" evidence="1">
    <location>
        <begin position="132"/>
        <end position="152"/>
    </location>
</feature>
<feature type="active site" evidence="1">
    <location>
        <position position="113"/>
    </location>
</feature>
<feature type="active site" evidence="1">
    <location>
        <position position="139"/>
    </location>
</feature>
<dbReference type="EC" id="3.4.23.36" evidence="1"/>
<dbReference type="EMBL" id="AE006470">
    <property type="protein sequence ID" value="AAM73031.1"/>
    <property type="molecule type" value="Genomic_DNA"/>
</dbReference>
<dbReference type="RefSeq" id="NP_662689.1">
    <property type="nucleotide sequence ID" value="NC_002932.3"/>
</dbReference>
<dbReference type="RefSeq" id="WP_010933470.1">
    <property type="nucleotide sequence ID" value="NC_002932.3"/>
</dbReference>
<dbReference type="SMR" id="Q8KBH7"/>
<dbReference type="STRING" id="194439.CT1810"/>
<dbReference type="EnsemblBacteria" id="AAM73031">
    <property type="protein sequence ID" value="AAM73031"/>
    <property type="gene ID" value="CT1810"/>
</dbReference>
<dbReference type="KEGG" id="cte:CT1810"/>
<dbReference type="PATRIC" id="fig|194439.7.peg.1643"/>
<dbReference type="eggNOG" id="COG0597">
    <property type="taxonomic scope" value="Bacteria"/>
</dbReference>
<dbReference type="HOGENOM" id="CLU_083252_4_3_10"/>
<dbReference type="OrthoDB" id="9810259at2"/>
<dbReference type="UniPathway" id="UPA00665"/>
<dbReference type="Proteomes" id="UP000001007">
    <property type="component" value="Chromosome"/>
</dbReference>
<dbReference type="GO" id="GO:0005886">
    <property type="term" value="C:plasma membrane"/>
    <property type="evidence" value="ECO:0007669"/>
    <property type="project" value="UniProtKB-SubCell"/>
</dbReference>
<dbReference type="GO" id="GO:0004190">
    <property type="term" value="F:aspartic-type endopeptidase activity"/>
    <property type="evidence" value="ECO:0007669"/>
    <property type="project" value="UniProtKB-UniRule"/>
</dbReference>
<dbReference type="GO" id="GO:0006508">
    <property type="term" value="P:proteolysis"/>
    <property type="evidence" value="ECO:0007669"/>
    <property type="project" value="UniProtKB-KW"/>
</dbReference>
<dbReference type="HAMAP" id="MF_00161">
    <property type="entry name" value="LspA"/>
    <property type="match status" value="1"/>
</dbReference>
<dbReference type="InterPro" id="IPR001872">
    <property type="entry name" value="Peptidase_A8"/>
</dbReference>
<dbReference type="NCBIfam" id="TIGR00077">
    <property type="entry name" value="lspA"/>
    <property type="match status" value="1"/>
</dbReference>
<dbReference type="NCBIfam" id="NF011368">
    <property type="entry name" value="PRK14787.1"/>
    <property type="match status" value="1"/>
</dbReference>
<dbReference type="PANTHER" id="PTHR33695">
    <property type="entry name" value="LIPOPROTEIN SIGNAL PEPTIDASE"/>
    <property type="match status" value="1"/>
</dbReference>
<dbReference type="PANTHER" id="PTHR33695:SF1">
    <property type="entry name" value="LIPOPROTEIN SIGNAL PEPTIDASE"/>
    <property type="match status" value="1"/>
</dbReference>
<dbReference type="Pfam" id="PF01252">
    <property type="entry name" value="Peptidase_A8"/>
    <property type="match status" value="1"/>
</dbReference>
<dbReference type="PRINTS" id="PR00781">
    <property type="entry name" value="LIPOSIGPTASE"/>
</dbReference>
<dbReference type="PROSITE" id="PS00855">
    <property type="entry name" value="SPASE_II"/>
    <property type="match status" value="1"/>
</dbReference>
<protein>
    <recommendedName>
        <fullName evidence="1">Lipoprotein signal peptidase</fullName>
        <ecNumber evidence="1">3.4.23.36</ecNumber>
    </recommendedName>
    <alternativeName>
        <fullName evidence="1">Prolipoprotein signal peptidase</fullName>
    </alternativeName>
    <alternativeName>
        <fullName evidence="1">Signal peptidase II</fullName>
        <shortName evidence="1">SPase II</shortName>
    </alternativeName>
</protein>